<organism>
    <name type="scientific">Arabidopsis thaliana</name>
    <name type="common">Mouse-ear cress</name>
    <dbReference type="NCBI Taxonomy" id="3702"/>
    <lineage>
        <taxon>Eukaryota</taxon>
        <taxon>Viridiplantae</taxon>
        <taxon>Streptophyta</taxon>
        <taxon>Embryophyta</taxon>
        <taxon>Tracheophyta</taxon>
        <taxon>Spermatophyta</taxon>
        <taxon>Magnoliopsida</taxon>
        <taxon>eudicotyledons</taxon>
        <taxon>Gunneridae</taxon>
        <taxon>Pentapetalae</taxon>
        <taxon>rosids</taxon>
        <taxon>malvids</taxon>
        <taxon>Brassicales</taxon>
        <taxon>Brassicaceae</taxon>
        <taxon>Camelineae</taxon>
        <taxon>Arabidopsis</taxon>
    </lineage>
</organism>
<protein>
    <recommendedName>
        <fullName>Transcriptional regulator TAC1</fullName>
    </recommendedName>
    <alternativeName>
        <fullName>Protein TELOMERASE ACTIVATOR1</fullName>
    </alternativeName>
</protein>
<feature type="chain" id="PRO_0000406148" description="Transcriptional regulator TAC1">
    <location>
        <begin position="1"/>
        <end position="172"/>
    </location>
</feature>
<feature type="zinc finger region" description="C2H2-type" evidence="2">
    <location>
        <begin position="35"/>
        <end position="57"/>
    </location>
</feature>
<feature type="region of interest" description="Disordered" evidence="3">
    <location>
        <begin position="1"/>
        <end position="28"/>
    </location>
</feature>
<feature type="short sequence motif" description="EAR-like (transcriptional repression)" evidence="1">
    <location>
        <begin position="156"/>
        <end position="160"/>
    </location>
</feature>
<feature type="compositionally biased region" description="Polar residues" evidence="3">
    <location>
        <begin position="15"/>
        <end position="28"/>
    </location>
</feature>
<sequence>MENIKNPKNADDCSDSISKNSHQGVDDSLNQSRSYVCSFCIRGFSNAQALGGHMNIHRRDRAKLRQKLMEDNKDDVVAESDASEVVSLDLNEQQQQQGEALTCDDHDQYVDNDISPKQKLEFWVQESKLDTNDHGKVTEASIDGSSSSHHRDIEVLDLELRLGQSVVKKKTT</sequence>
<accession>Q9SR34</accession>
<keyword id="KW-0010">Activator</keyword>
<keyword id="KW-0238">DNA-binding</keyword>
<keyword id="KW-0479">Metal-binding</keyword>
<keyword id="KW-0539">Nucleus</keyword>
<keyword id="KW-1185">Reference proteome</keyword>
<keyword id="KW-0804">Transcription</keyword>
<keyword id="KW-0805">Transcription regulation</keyword>
<keyword id="KW-0862">Zinc</keyword>
<keyword id="KW-0863">Zinc-finger</keyword>
<comment type="function">
    <text evidence="4 5">Activation factor which mediates telomerase activity and potentiates responses to auxin through the regulation of BT2. Binds in vitro to the DNA sequence 5'-GACAGTGTTAC-3' of the BT2 promoter.</text>
</comment>
<comment type="subcellular location">
    <subcellularLocation>
        <location evidence="6">Nucleus</location>
    </subcellularLocation>
</comment>
<comment type="tissue specificity">
    <text evidence="4">Preferentially expressed in roots and flowers. Slightly expressed in leaves and stems.</text>
</comment>
<comment type="domain">
    <text evidence="1">Contains a slightly degenerated ERF-associated amphiphilic repression (EAR) motif, which may be involved in the activity of transcriptional repression.</text>
</comment>
<comment type="disruption phenotype">
    <text evidence="4">Altered response to auxin, but persistance of the telomerase activity.</text>
</comment>
<dbReference type="EMBL" id="AC011436">
    <property type="protein sequence ID" value="AAF14043.1"/>
    <property type="molecule type" value="Genomic_DNA"/>
</dbReference>
<dbReference type="EMBL" id="CP002686">
    <property type="protein sequence ID" value="AEE74747.1"/>
    <property type="molecule type" value="Genomic_DNA"/>
</dbReference>
<dbReference type="EMBL" id="AB493607">
    <property type="protein sequence ID" value="BAH30445.1"/>
    <property type="molecule type" value="mRNA"/>
</dbReference>
<dbReference type="RefSeq" id="NP_187540.1">
    <property type="nucleotide sequence ID" value="NM_111763.2"/>
</dbReference>
<dbReference type="SMR" id="Q9SR34"/>
<dbReference type="BioGRID" id="5419">
    <property type="interactions" value="6"/>
</dbReference>
<dbReference type="IntAct" id="Q9SR34">
    <property type="interactions" value="6"/>
</dbReference>
<dbReference type="STRING" id="3702.Q9SR34"/>
<dbReference type="PaxDb" id="3702-AT3G09290.1"/>
<dbReference type="ProteomicsDB" id="234115"/>
<dbReference type="EnsemblPlants" id="AT3G09290.1">
    <property type="protein sequence ID" value="AT3G09290.1"/>
    <property type="gene ID" value="AT3G09290"/>
</dbReference>
<dbReference type="GeneID" id="820085"/>
<dbReference type="Gramene" id="AT3G09290.1">
    <property type="protein sequence ID" value="AT3G09290.1"/>
    <property type="gene ID" value="AT3G09290"/>
</dbReference>
<dbReference type="KEGG" id="ath:AT3G09290"/>
<dbReference type="Araport" id="AT3G09290"/>
<dbReference type="TAIR" id="AT3G09290">
    <property type="gene designation" value="TAC1"/>
</dbReference>
<dbReference type="eggNOG" id="ENOG502S768">
    <property type="taxonomic scope" value="Eukaryota"/>
</dbReference>
<dbReference type="HOGENOM" id="CLU_068782_2_0_1"/>
<dbReference type="InParanoid" id="Q9SR34"/>
<dbReference type="OMA" id="YICSFCV"/>
<dbReference type="PhylomeDB" id="Q9SR34"/>
<dbReference type="PRO" id="PR:Q9SR34"/>
<dbReference type="Proteomes" id="UP000006548">
    <property type="component" value="Chromosome 3"/>
</dbReference>
<dbReference type="ExpressionAtlas" id="Q9SR34">
    <property type="expression patterns" value="baseline and differential"/>
</dbReference>
<dbReference type="GO" id="GO:0005634">
    <property type="term" value="C:nucleus"/>
    <property type="evidence" value="ECO:0007669"/>
    <property type="project" value="UniProtKB-SubCell"/>
</dbReference>
<dbReference type="GO" id="GO:0003677">
    <property type="term" value="F:DNA binding"/>
    <property type="evidence" value="ECO:0007669"/>
    <property type="project" value="UniProtKB-KW"/>
</dbReference>
<dbReference type="GO" id="GO:0003700">
    <property type="term" value="F:DNA-binding transcription factor activity"/>
    <property type="evidence" value="ECO:0000315"/>
    <property type="project" value="TAIR"/>
</dbReference>
<dbReference type="GO" id="GO:0008270">
    <property type="term" value="F:zinc ion binding"/>
    <property type="evidence" value="ECO:0007669"/>
    <property type="project" value="UniProtKB-KW"/>
</dbReference>
<dbReference type="GO" id="GO:0006355">
    <property type="term" value="P:regulation of DNA-templated transcription"/>
    <property type="evidence" value="ECO:0000304"/>
    <property type="project" value="TAIR"/>
</dbReference>
<dbReference type="Gene3D" id="3.30.160.60">
    <property type="entry name" value="Classic Zinc Finger"/>
    <property type="match status" value="1"/>
</dbReference>
<dbReference type="InterPro" id="IPR052426">
    <property type="entry name" value="Plant_dev_regulator"/>
</dbReference>
<dbReference type="InterPro" id="IPR036236">
    <property type="entry name" value="Znf_C2H2_sf"/>
</dbReference>
<dbReference type="InterPro" id="IPR013087">
    <property type="entry name" value="Znf_C2H2_type"/>
</dbReference>
<dbReference type="PANTHER" id="PTHR45801">
    <property type="entry name" value="OS07G0101800 PROTEIN"/>
    <property type="match status" value="1"/>
</dbReference>
<dbReference type="PANTHER" id="PTHR45801:SF109">
    <property type="entry name" value="TRANSCRIPTIONAL REGULATOR TAC1"/>
    <property type="match status" value="1"/>
</dbReference>
<dbReference type="SUPFAM" id="SSF57667">
    <property type="entry name" value="beta-beta-alpha zinc fingers"/>
    <property type="match status" value="1"/>
</dbReference>
<dbReference type="PROSITE" id="PS00028">
    <property type="entry name" value="ZINC_FINGER_C2H2_1"/>
    <property type="match status" value="1"/>
</dbReference>
<dbReference type="PROSITE" id="PS50157">
    <property type="entry name" value="ZINC_FINGER_C2H2_2"/>
    <property type="match status" value="1"/>
</dbReference>
<gene>
    <name type="primary">TAC1</name>
    <name type="ordered locus">At3g09290</name>
    <name type="ORF">F3L24.16</name>
</gene>
<proteinExistence type="evidence at transcript level"/>
<name>TA1_ARATH</name>
<reference key="1">
    <citation type="journal article" date="2000" name="Nature">
        <title>Sequence and analysis of chromosome 3 of the plant Arabidopsis thaliana.</title>
        <authorList>
            <person name="Salanoubat M."/>
            <person name="Lemcke K."/>
            <person name="Rieger M."/>
            <person name="Ansorge W."/>
            <person name="Unseld M."/>
            <person name="Fartmann B."/>
            <person name="Valle G."/>
            <person name="Bloecker H."/>
            <person name="Perez-Alonso M."/>
            <person name="Obermaier B."/>
            <person name="Delseny M."/>
            <person name="Boutry M."/>
            <person name="Grivell L.A."/>
            <person name="Mache R."/>
            <person name="Puigdomenech P."/>
            <person name="De Simone V."/>
            <person name="Choisne N."/>
            <person name="Artiguenave F."/>
            <person name="Robert C."/>
            <person name="Brottier P."/>
            <person name="Wincker P."/>
            <person name="Cattolico L."/>
            <person name="Weissenbach J."/>
            <person name="Saurin W."/>
            <person name="Quetier F."/>
            <person name="Schaefer M."/>
            <person name="Mueller-Auer S."/>
            <person name="Gabel C."/>
            <person name="Fuchs M."/>
            <person name="Benes V."/>
            <person name="Wurmbach E."/>
            <person name="Drzonek H."/>
            <person name="Erfle H."/>
            <person name="Jordan N."/>
            <person name="Bangert S."/>
            <person name="Wiedelmann R."/>
            <person name="Kranz H."/>
            <person name="Voss H."/>
            <person name="Holland R."/>
            <person name="Brandt P."/>
            <person name="Nyakatura G."/>
            <person name="Vezzi A."/>
            <person name="D'Angelo M."/>
            <person name="Pallavicini A."/>
            <person name="Toppo S."/>
            <person name="Simionati B."/>
            <person name="Conrad A."/>
            <person name="Hornischer K."/>
            <person name="Kauer G."/>
            <person name="Loehnert T.-H."/>
            <person name="Nordsiek G."/>
            <person name="Reichelt J."/>
            <person name="Scharfe M."/>
            <person name="Schoen O."/>
            <person name="Bargues M."/>
            <person name="Terol J."/>
            <person name="Climent J."/>
            <person name="Navarro P."/>
            <person name="Collado C."/>
            <person name="Perez-Perez A."/>
            <person name="Ottenwaelder B."/>
            <person name="Duchemin D."/>
            <person name="Cooke R."/>
            <person name="Laudie M."/>
            <person name="Berger-Llauro C."/>
            <person name="Purnelle B."/>
            <person name="Masuy D."/>
            <person name="de Haan M."/>
            <person name="Maarse A.C."/>
            <person name="Alcaraz J.-P."/>
            <person name="Cottet A."/>
            <person name="Casacuberta E."/>
            <person name="Monfort A."/>
            <person name="Argiriou A."/>
            <person name="Flores M."/>
            <person name="Liguori R."/>
            <person name="Vitale D."/>
            <person name="Mannhaupt G."/>
            <person name="Haase D."/>
            <person name="Schoof H."/>
            <person name="Rudd S."/>
            <person name="Zaccaria P."/>
            <person name="Mewes H.-W."/>
            <person name="Mayer K.F.X."/>
            <person name="Kaul S."/>
            <person name="Town C.D."/>
            <person name="Koo H.L."/>
            <person name="Tallon L.J."/>
            <person name="Jenkins J."/>
            <person name="Rooney T."/>
            <person name="Rizzo M."/>
            <person name="Walts A."/>
            <person name="Utterback T."/>
            <person name="Fujii C.Y."/>
            <person name="Shea T.P."/>
            <person name="Creasy T.H."/>
            <person name="Haas B."/>
            <person name="Maiti R."/>
            <person name="Wu D."/>
            <person name="Peterson J."/>
            <person name="Van Aken S."/>
            <person name="Pai G."/>
            <person name="Militscher J."/>
            <person name="Sellers P."/>
            <person name="Gill J.E."/>
            <person name="Feldblyum T.V."/>
            <person name="Preuss D."/>
            <person name="Lin X."/>
            <person name="Nierman W.C."/>
            <person name="Salzberg S.L."/>
            <person name="White O."/>
            <person name="Venter J.C."/>
            <person name="Fraser C.M."/>
            <person name="Kaneko T."/>
            <person name="Nakamura Y."/>
            <person name="Sato S."/>
            <person name="Kato T."/>
            <person name="Asamizu E."/>
            <person name="Sasamoto S."/>
            <person name="Kimura T."/>
            <person name="Idesawa K."/>
            <person name="Kawashima K."/>
            <person name="Kishida Y."/>
            <person name="Kiyokawa C."/>
            <person name="Kohara M."/>
            <person name="Matsumoto M."/>
            <person name="Matsuno A."/>
            <person name="Muraki A."/>
            <person name="Nakayama S."/>
            <person name="Nakazaki N."/>
            <person name="Shinpo S."/>
            <person name="Takeuchi C."/>
            <person name="Wada T."/>
            <person name="Watanabe A."/>
            <person name="Yamada M."/>
            <person name="Yasuda M."/>
            <person name="Tabata S."/>
        </authorList>
    </citation>
    <scope>NUCLEOTIDE SEQUENCE [LARGE SCALE GENOMIC DNA]</scope>
    <source>
        <strain>cv. Columbia</strain>
    </source>
</reference>
<reference key="2">
    <citation type="journal article" date="2017" name="Plant J.">
        <title>Araport11: a complete reannotation of the Arabidopsis thaliana reference genome.</title>
        <authorList>
            <person name="Cheng C.Y."/>
            <person name="Krishnakumar V."/>
            <person name="Chan A.P."/>
            <person name="Thibaud-Nissen F."/>
            <person name="Schobel S."/>
            <person name="Town C.D."/>
        </authorList>
    </citation>
    <scope>GENOME REANNOTATION</scope>
    <source>
        <strain>cv. Columbia</strain>
    </source>
</reference>
<reference key="3">
    <citation type="submission" date="2009-03" db="EMBL/GenBank/DDBJ databases">
        <title>ORF cloning and analysis of Arabidopsis transcription factor genes.</title>
        <authorList>
            <person name="Fujita M."/>
            <person name="Mizukado S."/>
            <person name="Seki M."/>
            <person name="Shinozaki K."/>
            <person name="Mitsuda N."/>
            <person name="Takiguchi Y."/>
            <person name="Takagi M."/>
        </authorList>
    </citation>
    <scope>NUCLEOTIDE SEQUENCE [LARGE SCALE MRNA]</scope>
</reference>
<reference key="4">
    <citation type="journal article" date="2004" name="Plant Cell">
        <title>TELOMERASE ACTIVATOR1 induces telomerase activity and potentiates responses to auxin in Arabidopsis.</title>
        <authorList>
            <person name="Ren S."/>
            <person name="Johnston J.S."/>
            <person name="Shippen D.E."/>
            <person name="McKnight T.D."/>
        </authorList>
    </citation>
    <scope>FUNCTION</scope>
    <scope>DOMAIN EAR-LIKE</scope>
    <scope>TISSUE SPECIFICITY</scope>
    <scope>DISRUPTION PHENOTYPE</scope>
</reference>
<reference key="5">
    <citation type="journal article" date="2007" name="Plant Cell">
        <title>Regulation of telomerase in Arabidopsis by BT2, an apparent target of TELOMERASE ACTIVATOR1.</title>
        <authorList>
            <person name="Ren S."/>
            <person name="Mandadi K.K."/>
            <person name="Boedeker A.L."/>
            <person name="Rathore K.S."/>
            <person name="McKnight T.D."/>
        </authorList>
    </citation>
    <scope>FUNCTION</scope>
</reference>
<evidence type="ECO:0000250" key="1"/>
<evidence type="ECO:0000255" key="2">
    <source>
        <dbReference type="PROSITE-ProRule" id="PRU00042"/>
    </source>
</evidence>
<evidence type="ECO:0000256" key="3">
    <source>
        <dbReference type="SAM" id="MobiDB-lite"/>
    </source>
</evidence>
<evidence type="ECO:0000269" key="4">
    <source>
    </source>
</evidence>
<evidence type="ECO:0000269" key="5">
    <source>
    </source>
</evidence>
<evidence type="ECO:0000305" key="6"/>